<protein>
    <recommendedName>
        <fullName evidence="1">Carbamoyl phosphate synthase large chain</fullName>
        <ecNumber evidence="1">6.3.4.16</ecNumber>
        <ecNumber evidence="1">6.3.5.5</ecNumber>
    </recommendedName>
    <alternativeName>
        <fullName evidence="1">Carbamoyl phosphate synthetase ammonia chain</fullName>
    </alternativeName>
</protein>
<name>CARB_VIBCH</name>
<accession>Q9KPH9</accession>
<comment type="function">
    <text evidence="1">Large subunit of the glutamine-dependent carbamoyl phosphate synthetase (CPSase). CPSase catalyzes the formation of carbamoyl phosphate from the ammonia moiety of glutamine, carbonate, and phosphate donated by ATP, constituting the first step of 2 biosynthetic pathways, one leading to arginine and/or urea and the other to pyrimidine nucleotides. The large subunit (synthetase) binds the substrates ammonia (free or transferred from glutamine from the small subunit), hydrogencarbonate and ATP and carries out an ATP-coupled ligase reaction, activating hydrogencarbonate by forming carboxy phosphate which reacts with ammonia to form carbamoyl phosphate.</text>
</comment>
<comment type="catalytic activity">
    <reaction evidence="1">
        <text>hydrogencarbonate + L-glutamine + 2 ATP + H2O = carbamoyl phosphate + L-glutamate + 2 ADP + phosphate + 2 H(+)</text>
        <dbReference type="Rhea" id="RHEA:18633"/>
        <dbReference type="ChEBI" id="CHEBI:15377"/>
        <dbReference type="ChEBI" id="CHEBI:15378"/>
        <dbReference type="ChEBI" id="CHEBI:17544"/>
        <dbReference type="ChEBI" id="CHEBI:29985"/>
        <dbReference type="ChEBI" id="CHEBI:30616"/>
        <dbReference type="ChEBI" id="CHEBI:43474"/>
        <dbReference type="ChEBI" id="CHEBI:58228"/>
        <dbReference type="ChEBI" id="CHEBI:58359"/>
        <dbReference type="ChEBI" id="CHEBI:456216"/>
        <dbReference type="EC" id="6.3.5.5"/>
    </reaction>
</comment>
<comment type="catalytic activity">
    <molecule>Carbamoyl phosphate synthase large chain</molecule>
    <reaction evidence="1">
        <text>hydrogencarbonate + NH4(+) + 2 ATP = carbamoyl phosphate + 2 ADP + phosphate + 2 H(+)</text>
        <dbReference type="Rhea" id="RHEA:18029"/>
        <dbReference type="ChEBI" id="CHEBI:15378"/>
        <dbReference type="ChEBI" id="CHEBI:17544"/>
        <dbReference type="ChEBI" id="CHEBI:28938"/>
        <dbReference type="ChEBI" id="CHEBI:30616"/>
        <dbReference type="ChEBI" id="CHEBI:43474"/>
        <dbReference type="ChEBI" id="CHEBI:58228"/>
        <dbReference type="ChEBI" id="CHEBI:456216"/>
        <dbReference type="EC" id="6.3.4.16"/>
    </reaction>
</comment>
<comment type="cofactor">
    <cofactor evidence="1">
        <name>Mg(2+)</name>
        <dbReference type="ChEBI" id="CHEBI:18420"/>
    </cofactor>
    <cofactor evidence="1">
        <name>Mn(2+)</name>
        <dbReference type="ChEBI" id="CHEBI:29035"/>
    </cofactor>
    <text evidence="1">Binds 4 Mg(2+) or Mn(2+) ions per subunit.</text>
</comment>
<comment type="pathway">
    <text evidence="1">Amino-acid biosynthesis; L-arginine biosynthesis; carbamoyl phosphate from bicarbonate: step 1/1.</text>
</comment>
<comment type="pathway">
    <text evidence="1">Pyrimidine metabolism; UMP biosynthesis via de novo pathway; (S)-dihydroorotate from bicarbonate: step 1/3.</text>
</comment>
<comment type="subunit">
    <text evidence="1">Composed of two chains; the small (or glutamine) chain promotes the hydrolysis of glutamine to ammonia, which is used by the large (or ammonia) chain to synthesize carbamoyl phosphate. Tetramer of heterodimers (alpha,beta)4.</text>
</comment>
<comment type="domain">
    <text evidence="1">The large subunit is composed of 2 ATP-grasp domains that are involved in binding the 2 ATP molecules needed for carbamoyl phosphate synthesis. The N-terminal ATP-grasp domain (referred to as the carboxyphosphate synthetic component) catalyzes the ATP-dependent phosphorylation of hydrogencarbonate to carboxyphosphate and the subsequent nucleophilic attack by ammonia to form a carbamate intermediate. The C-terminal ATP-grasp domain (referred to as the carbamoyl phosphate synthetic component) then catalyzes the phosphorylation of carbamate with the second ATP to form the end product carbamoyl phosphate. The reactive and unstable enzyme intermediates are sequentially channeled from one active site to the next through the interior of the protein over a distance of at least 96 A.</text>
</comment>
<comment type="similarity">
    <text evidence="1">Belongs to the CarB family.</text>
</comment>
<feature type="chain" id="PRO_0000145061" description="Carbamoyl phosphate synthase large chain">
    <location>
        <begin position="1"/>
        <end position="1076"/>
    </location>
</feature>
<feature type="domain" description="ATP-grasp 1" evidence="1">
    <location>
        <begin position="133"/>
        <end position="328"/>
    </location>
</feature>
<feature type="domain" description="ATP-grasp 2" evidence="1">
    <location>
        <begin position="678"/>
        <end position="869"/>
    </location>
</feature>
<feature type="domain" description="MGS-like" evidence="1">
    <location>
        <begin position="936"/>
        <end position="1076"/>
    </location>
</feature>
<feature type="region of interest" description="Carboxyphosphate synthetic domain" evidence="1">
    <location>
        <begin position="1"/>
        <end position="403"/>
    </location>
</feature>
<feature type="region of interest" description="Oligomerization domain" evidence="1">
    <location>
        <begin position="404"/>
        <end position="553"/>
    </location>
</feature>
<feature type="region of interest" description="Carbamoyl phosphate synthetic domain" evidence="1">
    <location>
        <begin position="554"/>
        <end position="935"/>
    </location>
</feature>
<feature type="region of interest" description="Allosteric domain" evidence="1">
    <location>
        <begin position="936"/>
        <end position="1076"/>
    </location>
</feature>
<feature type="binding site" evidence="1">
    <location>
        <position position="129"/>
    </location>
    <ligand>
        <name>ATP</name>
        <dbReference type="ChEBI" id="CHEBI:30616"/>
        <label>1</label>
    </ligand>
</feature>
<feature type="binding site" evidence="1">
    <location>
        <position position="169"/>
    </location>
    <ligand>
        <name>ATP</name>
        <dbReference type="ChEBI" id="CHEBI:30616"/>
        <label>1</label>
    </ligand>
</feature>
<feature type="binding site" evidence="1">
    <location>
        <position position="175"/>
    </location>
    <ligand>
        <name>ATP</name>
        <dbReference type="ChEBI" id="CHEBI:30616"/>
        <label>1</label>
    </ligand>
</feature>
<feature type="binding site" evidence="1">
    <location>
        <position position="176"/>
    </location>
    <ligand>
        <name>ATP</name>
        <dbReference type="ChEBI" id="CHEBI:30616"/>
        <label>1</label>
    </ligand>
</feature>
<feature type="binding site" evidence="1">
    <location>
        <position position="208"/>
    </location>
    <ligand>
        <name>ATP</name>
        <dbReference type="ChEBI" id="CHEBI:30616"/>
        <label>1</label>
    </ligand>
</feature>
<feature type="binding site" evidence="1">
    <location>
        <position position="210"/>
    </location>
    <ligand>
        <name>ATP</name>
        <dbReference type="ChEBI" id="CHEBI:30616"/>
        <label>1</label>
    </ligand>
</feature>
<feature type="binding site" evidence="1">
    <location>
        <position position="215"/>
    </location>
    <ligand>
        <name>ATP</name>
        <dbReference type="ChEBI" id="CHEBI:30616"/>
        <label>1</label>
    </ligand>
</feature>
<feature type="binding site" evidence="1">
    <location>
        <position position="241"/>
    </location>
    <ligand>
        <name>ATP</name>
        <dbReference type="ChEBI" id="CHEBI:30616"/>
        <label>1</label>
    </ligand>
</feature>
<feature type="binding site" evidence="1">
    <location>
        <position position="242"/>
    </location>
    <ligand>
        <name>ATP</name>
        <dbReference type="ChEBI" id="CHEBI:30616"/>
        <label>1</label>
    </ligand>
</feature>
<feature type="binding site" evidence="1">
    <location>
        <position position="243"/>
    </location>
    <ligand>
        <name>ATP</name>
        <dbReference type="ChEBI" id="CHEBI:30616"/>
        <label>1</label>
    </ligand>
</feature>
<feature type="binding site" evidence="1">
    <location>
        <position position="285"/>
    </location>
    <ligand>
        <name>ATP</name>
        <dbReference type="ChEBI" id="CHEBI:30616"/>
        <label>1</label>
    </ligand>
</feature>
<feature type="binding site" evidence="1">
    <location>
        <position position="285"/>
    </location>
    <ligand>
        <name>Mg(2+)</name>
        <dbReference type="ChEBI" id="CHEBI:18420"/>
        <label>1</label>
    </ligand>
</feature>
<feature type="binding site" evidence="1">
    <location>
        <position position="285"/>
    </location>
    <ligand>
        <name>Mn(2+)</name>
        <dbReference type="ChEBI" id="CHEBI:29035"/>
        <label>1</label>
    </ligand>
</feature>
<feature type="binding site" evidence="1">
    <location>
        <position position="299"/>
    </location>
    <ligand>
        <name>ATP</name>
        <dbReference type="ChEBI" id="CHEBI:30616"/>
        <label>1</label>
    </ligand>
</feature>
<feature type="binding site" evidence="1">
    <location>
        <position position="299"/>
    </location>
    <ligand>
        <name>Mg(2+)</name>
        <dbReference type="ChEBI" id="CHEBI:18420"/>
        <label>1</label>
    </ligand>
</feature>
<feature type="binding site" evidence="1">
    <location>
        <position position="299"/>
    </location>
    <ligand>
        <name>Mg(2+)</name>
        <dbReference type="ChEBI" id="CHEBI:18420"/>
        <label>2</label>
    </ligand>
</feature>
<feature type="binding site" evidence="1">
    <location>
        <position position="299"/>
    </location>
    <ligand>
        <name>Mn(2+)</name>
        <dbReference type="ChEBI" id="CHEBI:29035"/>
        <label>1</label>
    </ligand>
</feature>
<feature type="binding site" evidence="1">
    <location>
        <position position="299"/>
    </location>
    <ligand>
        <name>Mn(2+)</name>
        <dbReference type="ChEBI" id="CHEBI:29035"/>
        <label>2</label>
    </ligand>
</feature>
<feature type="binding site" evidence="1">
    <location>
        <position position="301"/>
    </location>
    <ligand>
        <name>Mg(2+)</name>
        <dbReference type="ChEBI" id="CHEBI:18420"/>
        <label>2</label>
    </ligand>
</feature>
<feature type="binding site" evidence="1">
    <location>
        <position position="301"/>
    </location>
    <ligand>
        <name>Mn(2+)</name>
        <dbReference type="ChEBI" id="CHEBI:29035"/>
        <label>2</label>
    </ligand>
</feature>
<feature type="binding site" evidence="1">
    <location>
        <position position="714"/>
    </location>
    <ligand>
        <name>ATP</name>
        <dbReference type="ChEBI" id="CHEBI:30616"/>
        <label>2</label>
    </ligand>
</feature>
<feature type="binding site" evidence="1">
    <location>
        <position position="753"/>
    </location>
    <ligand>
        <name>ATP</name>
        <dbReference type="ChEBI" id="CHEBI:30616"/>
        <label>2</label>
    </ligand>
</feature>
<feature type="binding site" evidence="1">
    <location>
        <position position="755"/>
    </location>
    <ligand>
        <name>ATP</name>
        <dbReference type="ChEBI" id="CHEBI:30616"/>
        <label>2</label>
    </ligand>
</feature>
<feature type="binding site" evidence="1">
    <location>
        <position position="760"/>
    </location>
    <ligand>
        <name>ATP</name>
        <dbReference type="ChEBI" id="CHEBI:30616"/>
        <label>2</label>
    </ligand>
</feature>
<feature type="binding site" evidence="1">
    <location>
        <position position="785"/>
    </location>
    <ligand>
        <name>ATP</name>
        <dbReference type="ChEBI" id="CHEBI:30616"/>
        <label>2</label>
    </ligand>
</feature>
<feature type="binding site" evidence="1">
    <location>
        <position position="786"/>
    </location>
    <ligand>
        <name>ATP</name>
        <dbReference type="ChEBI" id="CHEBI:30616"/>
        <label>2</label>
    </ligand>
</feature>
<feature type="binding site" evidence="1">
    <location>
        <position position="787"/>
    </location>
    <ligand>
        <name>ATP</name>
        <dbReference type="ChEBI" id="CHEBI:30616"/>
        <label>2</label>
    </ligand>
</feature>
<feature type="binding site" evidence="1">
    <location>
        <position position="788"/>
    </location>
    <ligand>
        <name>ATP</name>
        <dbReference type="ChEBI" id="CHEBI:30616"/>
        <label>2</label>
    </ligand>
</feature>
<feature type="binding site" evidence="1">
    <location>
        <position position="828"/>
    </location>
    <ligand>
        <name>ATP</name>
        <dbReference type="ChEBI" id="CHEBI:30616"/>
        <label>2</label>
    </ligand>
</feature>
<feature type="binding site" evidence="1">
    <location>
        <position position="828"/>
    </location>
    <ligand>
        <name>Mg(2+)</name>
        <dbReference type="ChEBI" id="CHEBI:18420"/>
        <label>3</label>
    </ligand>
</feature>
<feature type="binding site" evidence="1">
    <location>
        <position position="828"/>
    </location>
    <ligand>
        <name>Mn(2+)</name>
        <dbReference type="ChEBI" id="CHEBI:29035"/>
        <label>3</label>
    </ligand>
</feature>
<feature type="binding site" evidence="1">
    <location>
        <position position="840"/>
    </location>
    <ligand>
        <name>ATP</name>
        <dbReference type="ChEBI" id="CHEBI:30616"/>
        <label>2</label>
    </ligand>
</feature>
<feature type="binding site" evidence="1">
    <location>
        <position position="840"/>
    </location>
    <ligand>
        <name>Mg(2+)</name>
        <dbReference type="ChEBI" id="CHEBI:18420"/>
        <label>3</label>
    </ligand>
</feature>
<feature type="binding site" evidence="1">
    <location>
        <position position="840"/>
    </location>
    <ligand>
        <name>Mg(2+)</name>
        <dbReference type="ChEBI" id="CHEBI:18420"/>
        <label>4</label>
    </ligand>
</feature>
<feature type="binding site" evidence="1">
    <location>
        <position position="840"/>
    </location>
    <ligand>
        <name>Mn(2+)</name>
        <dbReference type="ChEBI" id="CHEBI:29035"/>
        <label>3</label>
    </ligand>
</feature>
<feature type="binding site" evidence="1">
    <location>
        <position position="840"/>
    </location>
    <ligand>
        <name>Mn(2+)</name>
        <dbReference type="ChEBI" id="CHEBI:29035"/>
        <label>4</label>
    </ligand>
</feature>
<feature type="binding site" evidence="1">
    <location>
        <position position="842"/>
    </location>
    <ligand>
        <name>Mg(2+)</name>
        <dbReference type="ChEBI" id="CHEBI:18420"/>
        <label>4</label>
    </ligand>
</feature>
<feature type="binding site" evidence="1">
    <location>
        <position position="842"/>
    </location>
    <ligand>
        <name>Mn(2+)</name>
        <dbReference type="ChEBI" id="CHEBI:29035"/>
        <label>4</label>
    </ligand>
</feature>
<gene>
    <name evidence="1" type="primary">carB</name>
    <name type="ordered locus">VC_2389</name>
</gene>
<dbReference type="EC" id="6.3.4.16" evidence="1"/>
<dbReference type="EC" id="6.3.5.5" evidence="1"/>
<dbReference type="EMBL" id="AE003852">
    <property type="protein sequence ID" value="AAF95532.1"/>
    <property type="molecule type" value="Genomic_DNA"/>
</dbReference>
<dbReference type="PIR" id="D82083">
    <property type="entry name" value="D82083"/>
</dbReference>
<dbReference type="RefSeq" id="NP_232019.1">
    <property type="nucleotide sequence ID" value="NC_002505.1"/>
</dbReference>
<dbReference type="RefSeq" id="WP_001126441.1">
    <property type="nucleotide sequence ID" value="NZ_LT906614.1"/>
</dbReference>
<dbReference type="SMR" id="Q9KPH9"/>
<dbReference type="STRING" id="243277.VC_2389"/>
<dbReference type="DNASU" id="2613058"/>
<dbReference type="EnsemblBacteria" id="AAF95532">
    <property type="protein sequence ID" value="AAF95532"/>
    <property type="gene ID" value="VC_2389"/>
</dbReference>
<dbReference type="GeneID" id="69719003"/>
<dbReference type="KEGG" id="vch:VC_2389"/>
<dbReference type="PATRIC" id="fig|243277.26.peg.2275"/>
<dbReference type="eggNOG" id="COG0458">
    <property type="taxonomic scope" value="Bacteria"/>
</dbReference>
<dbReference type="HOGENOM" id="CLU_000513_1_3_6"/>
<dbReference type="UniPathway" id="UPA00068">
    <property type="reaction ID" value="UER00171"/>
</dbReference>
<dbReference type="UniPathway" id="UPA00070">
    <property type="reaction ID" value="UER00115"/>
</dbReference>
<dbReference type="Proteomes" id="UP000000584">
    <property type="component" value="Chromosome 1"/>
</dbReference>
<dbReference type="GO" id="GO:0005737">
    <property type="term" value="C:cytoplasm"/>
    <property type="evidence" value="ECO:0000318"/>
    <property type="project" value="GO_Central"/>
</dbReference>
<dbReference type="GO" id="GO:0005524">
    <property type="term" value="F:ATP binding"/>
    <property type="evidence" value="ECO:0007669"/>
    <property type="project" value="UniProtKB-UniRule"/>
</dbReference>
<dbReference type="GO" id="GO:0004087">
    <property type="term" value="F:carbamoyl-phosphate synthase (ammonia) activity"/>
    <property type="evidence" value="ECO:0007669"/>
    <property type="project" value="RHEA"/>
</dbReference>
<dbReference type="GO" id="GO:0004088">
    <property type="term" value="F:carbamoyl-phosphate synthase (glutamine-hydrolyzing) activity"/>
    <property type="evidence" value="ECO:0007669"/>
    <property type="project" value="UniProtKB-UniRule"/>
</dbReference>
<dbReference type="GO" id="GO:0046872">
    <property type="term" value="F:metal ion binding"/>
    <property type="evidence" value="ECO:0007669"/>
    <property type="project" value="UniProtKB-KW"/>
</dbReference>
<dbReference type="GO" id="GO:0044205">
    <property type="term" value="P:'de novo' UMP biosynthetic process"/>
    <property type="evidence" value="ECO:0007669"/>
    <property type="project" value="UniProtKB-UniRule"/>
</dbReference>
<dbReference type="GO" id="GO:0006541">
    <property type="term" value="P:glutamine metabolic process"/>
    <property type="evidence" value="ECO:0000318"/>
    <property type="project" value="GO_Central"/>
</dbReference>
<dbReference type="GO" id="GO:0006526">
    <property type="term" value="P:L-arginine biosynthetic process"/>
    <property type="evidence" value="ECO:0007669"/>
    <property type="project" value="UniProtKB-UniRule"/>
</dbReference>
<dbReference type="CDD" id="cd01424">
    <property type="entry name" value="MGS_CPS_II"/>
    <property type="match status" value="1"/>
</dbReference>
<dbReference type="FunFam" id="1.10.1030.10:FF:000002">
    <property type="entry name" value="Carbamoyl-phosphate synthase large chain"/>
    <property type="match status" value="1"/>
</dbReference>
<dbReference type="FunFam" id="3.30.1490.20:FF:000001">
    <property type="entry name" value="Carbamoyl-phosphate synthase large chain"/>
    <property type="match status" value="1"/>
</dbReference>
<dbReference type="FunFam" id="3.30.470.20:FF:000007">
    <property type="entry name" value="Carbamoyl-phosphate synthase large chain"/>
    <property type="match status" value="1"/>
</dbReference>
<dbReference type="FunFam" id="3.30.470.20:FF:000013">
    <property type="entry name" value="Carbamoyl-phosphate synthase large chain"/>
    <property type="match status" value="1"/>
</dbReference>
<dbReference type="FunFam" id="3.40.50.1380:FF:000004">
    <property type="entry name" value="Carbamoyl-phosphate synthase large chain"/>
    <property type="match status" value="1"/>
</dbReference>
<dbReference type="FunFam" id="3.40.50.20:FF:000001">
    <property type="entry name" value="Carbamoyl-phosphate synthase large chain"/>
    <property type="match status" value="1"/>
</dbReference>
<dbReference type="FunFam" id="3.40.50.20:FF:000003">
    <property type="entry name" value="Carbamoyl-phosphate synthase large chain"/>
    <property type="match status" value="1"/>
</dbReference>
<dbReference type="Gene3D" id="3.40.50.20">
    <property type="match status" value="2"/>
</dbReference>
<dbReference type="Gene3D" id="3.30.470.20">
    <property type="entry name" value="ATP-grasp fold, B domain"/>
    <property type="match status" value="2"/>
</dbReference>
<dbReference type="Gene3D" id="1.10.1030.10">
    <property type="entry name" value="Carbamoyl-phosphate synthetase, large subunit oligomerisation domain"/>
    <property type="match status" value="1"/>
</dbReference>
<dbReference type="Gene3D" id="3.40.50.1380">
    <property type="entry name" value="Methylglyoxal synthase-like domain"/>
    <property type="match status" value="1"/>
</dbReference>
<dbReference type="HAMAP" id="MF_01210_A">
    <property type="entry name" value="CPSase_L_chain_A"/>
    <property type="match status" value="1"/>
</dbReference>
<dbReference type="HAMAP" id="MF_01210_B">
    <property type="entry name" value="CPSase_L_chain_B"/>
    <property type="match status" value="1"/>
</dbReference>
<dbReference type="InterPro" id="IPR011761">
    <property type="entry name" value="ATP-grasp"/>
</dbReference>
<dbReference type="InterPro" id="IPR006275">
    <property type="entry name" value="CarbamoylP_synth_lsu"/>
</dbReference>
<dbReference type="InterPro" id="IPR005480">
    <property type="entry name" value="CarbamoylP_synth_lsu_oligo"/>
</dbReference>
<dbReference type="InterPro" id="IPR036897">
    <property type="entry name" value="CarbamoylP_synth_lsu_oligo_sf"/>
</dbReference>
<dbReference type="InterPro" id="IPR005479">
    <property type="entry name" value="CbamoylP_synth_lsu-like_ATP-bd"/>
</dbReference>
<dbReference type="InterPro" id="IPR005483">
    <property type="entry name" value="CbamoylP_synth_lsu_CPSase_dom"/>
</dbReference>
<dbReference type="InterPro" id="IPR011607">
    <property type="entry name" value="MGS-like_dom"/>
</dbReference>
<dbReference type="InterPro" id="IPR036914">
    <property type="entry name" value="MGS-like_dom_sf"/>
</dbReference>
<dbReference type="InterPro" id="IPR033937">
    <property type="entry name" value="MGS_CPS_CarB"/>
</dbReference>
<dbReference type="InterPro" id="IPR016185">
    <property type="entry name" value="PreATP-grasp_dom_sf"/>
</dbReference>
<dbReference type="NCBIfam" id="TIGR01369">
    <property type="entry name" value="CPSaseII_lrg"/>
    <property type="match status" value="1"/>
</dbReference>
<dbReference type="NCBIfam" id="NF003671">
    <property type="entry name" value="PRK05294.1"/>
    <property type="match status" value="1"/>
</dbReference>
<dbReference type="NCBIfam" id="NF009455">
    <property type="entry name" value="PRK12815.1"/>
    <property type="match status" value="1"/>
</dbReference>
<dbReference type="PANTHER" id="PTHR11405:SF53">
    <property type="entry name" value="CARBAMOYL-PHOSPHATE SYNTHASE [AMMONIA], MITOCHONDRIAL"/>
    <property type="match status" value="1"/>
</dbReference>
<dbReference type="PANTHER" id="PTHR11405">
    <property type="entry name" value="CARBAMOYLTRANSFERASE FAMILY MEMBER"/>
    <property type="match status" value="1"/>
</dbReference>
<dbReference type="Pfam" id="PF02786">
    <property type="entry name" value="CPSase_L_D2"/>
    <property type="match status" value="2"/>
</dbReference>
<dbReference type="Pfam" id="PF02787">
    <property type="entry name" value="CPSase_L_D3"/>
    <property type="match status" value="1"/>
</dbReference>
<dbReference type="Pfam" id="PF02142">
    <property type="entry name" value="MGS"/>
    <property type="match status" value="1"/>
</dbReference>
<dbReference type="PRINTS" id="PR00098">
    <property type="entry name" value="CPSASE"/>
</dbReference>
<dbReference type="SMART" id="SM01096">
    <property type="entry name" value="CPSase_L_D3"/>
    <property type="match status" value="1"/>
</dbReference>
<dbReference type="SMART" id="SM00851">
    <property type="entry name" value="MGS"/>
    <property type="match status" value="1"/>
</dbReference>
<dbReference type="SUPFAM" id="SSF48108">
    <property type="entry name" value="Carbamoyl phosphate synthetase, large subunit connection domain"/>
    <property type="match status" value="1"/>
</dbReference>
<dbReference type="SUPFAM" id="SSF56059">
    <property type="entry name" value="Glutathione synthetase ATP-binding domain-like"/>
    <property type="match status" value="2"/>
</dbReference>
<dbReference type="SUPFAM" id="SSF52335">
    <property type="entry name" value="Methylglyoxal synthase-like"/>
    <property type="match status" value="1"/>
</dbReference>
<dbReference type="SUPFAM" id="SSF52440">
    <property type="entry name" value="PreATP-grasp domain"/>
    <property type="match status" value="2"/>
</dbReference>
<dbReference type="PROSITE" id="PS50975">
    <property type="entry name" value="ATP_GRASP"/>
    <property type="match status" value="2"/>
</dbReference>
<dbReference type="PROSITE" id="PS00866">
    <property type="entry name" value="CPSASE_1"/>
    <property type="match status" value="2"/>
</dbReference>
<dbReference type="PROSITE" id="PS00867">
    <property type="entry name" value="CPSASE_2"/>
    <property type="match status" value="2"/>
</dbReference>
<dbReference type="PROSITE" id="PS51855">
    <property type="entry name" value="MGS"/>
    <property type="match status" value="1"/>
</dbReference>
<sequence length="1076" mass="117913">MPKRTDIQSILILGAGPIVIGQACEFDYSGAQACKALREEGYRVILVNSNPATIMTDPEMADATYIEPIHWEVVRKIIEKERPDAILPTMGGQTALNCALALEKHGVLAEFGVEMIGATADAIDKAEDRSRFDKAMKSIGLECPRADTAKSMEEAYKVLDMVGFPCIIRPSFTMGGSGGGIAYNREEFEEICTRGLDLSPTNELLIDESLIGWKEYEMEVVRDKNDNCIIVCAIENFDPMGIHTGDSITVAPAQTLTDKEYQIMRNASLAVLREIGVETGGSNVQFGINPKDGRMVIIEMNPRVSRSSALASKATGFPIAKVAAKLAVGFTLDELMNDITGGATPASFEPTIDYVVTKIPRFNFEKFAGANDRLTTQMKSVGEVMAIGRNQQESLQKALRGLEVGAAGLDEKVDLDAPDALTKIRYELKEAGAERIWYIADAFRAGMSVDGVFNLTNIDRWFLVQIEELVKLEAEVKAGGFAGLNQDVLRKMKRKGFSDARLSKLLGVSENEIRRLRDQYNIHPVYKRVDTCAAEFKSDTAYMYSTYDEECEANPTDKDKIMVLGGGPNRIGQGIEFDYCCVHAALALREDGYETIMVNCNPETVSTDYDTSDRLYFEPVTLEDVLAIVRVEKPKGVIVQYGGQTPLKLARALEAAGVPVIGTSPDAIDRAEDRERFQQAVQRLGLKQPDNATVTAIEQAIEKSREIGFPLVVRPSYVLGGRAMEIVYDEQDLRRYFNEAVSVSNESPVLLDRFLDDATEVDVDAICDGERVVIGGIMEHIEQAGVHSGDSACSLPAYTLSQEIQDKMREQVEKLAFELGVRGLMNIQFAVKDNEVYLIEVNPRAARTVPFVSKATGAPLAKIAARVMVGQTLEQQGFTKEIIPPYYSVKEVVLPFNKFPGVDPLLGPEMRSTGEVMGVGATFAEAYAKAELGCGSVYPEGGRALLSVREGDKQRVVDLASKLVKLGYQLDATHGTAVILGEAGINPRLVNKVHEGRPHILDRIKNHEYTYIVNTASGRQAIEDSKVLRRGALAHKVNYTTTLNAAFATCMSHTADAKASVTSVQELHARVKANQA</sequence>
<reference key="1">
    <citation type="journal article" date="2000" name="Nature">
        <title>DNA sequence of both chromosomes of the cholera pathogen Vibrio cholerae.</title>
        <authorList>
            <person name="Heidelberg J.F."/>
            <person name="Eisen J.A."/>
            <person name="Nelson W.C."/>
            <person name="Clayton R.A."/>
            <person name="Gwinn M.L."/>
            <person name="Dodson R.J."/>
            <person name="Haft D.H."/>
            <person name="Hickey E.K."/>
            <person name="Peterson J.D."/>
            <person name="Umayam L.A."/>
            <person name="Gill S.R."/>
            <person name="Nelson K.E."/>
            <person name="Read T.D."/>
            <person name="Tettelin H."/>
            <person name="Richardson D.L."/>
            <person name="Ermolaeva M.D."/>
            <person name="Vamathevan J.J."/>
            <person name="Bass S."/>
            <person name="Qin H."/>
            <person name="Dragoi I."/>
            <person name="Sellers P."/>
            <person name="McDonald L.A."/>
            <person name="Utterback T.R."/>
            <person name="Fleischmann R.D."/>
            <person name="Nierman W.C."/>
            <person name="White O."/>
            <person name="Salzberg S.L."/>
            <person name="Smith H.O."/>
            <person name="Colwell R.R."/>
            <person name="Mekalanos J.J."/>
            <person name="Venter J.C."/>
            <person name="Fraser C.M."/>
        </authorList>
    </citation>
    <scope>NUCLEOTIDE SEQUENCE [LARGE SCALE GENOMIC DNA]</scope>
    <source>
        <strain>ATCC 39315 / El Tor Inaba N16961</strain>
    </source>
</reference>
<organism>
    <name type="scientific">Vibrio cholerae serotype O1 (strain ATCC 39315 / El Tor Inaba N16961)</name>
    <dbReference type="NCBI Taxonomy" id="243277"/>
    <lineage>
        <taxon>Bacteria</taxon>
        <taxon>Pseudomonadati</taxon>
        <taxon>Pseudomonadota</taxon>
        <taxon>Gammaproteobacteria</taxon>
        <taxon>Vibrionales</taxon>
        <taxon>Vibrionaceae</taxon>
        <taxon>Vibrio</taxon>
    </lineage>
</organism>
<keyword id="KW-0028">Amino-acid biosynthesis</keyword>
<keyword id="KW-0055">Arginine biosynthesis</keyword>
<keyword id="KW-0067">ATP-binding</keyword>
<keyword id="KW-0436">Ligase</keyword>
<keyword id="KW-0460">Magnesium</keyword>
<keyword id="KW-0464">Manganese</keyword>
<keyword id="KW-0479">Metal-binding</keyword>
<keyword id="KW-0547">Nucleotide-binding</keyword>
<keyword id="KW-0665">Pyrimidine biosynthesis</keyword>
<keyword id="KW-1185">Reference proteome</keyword>
<keyword id="KW-0677">Repeat</keyword>
<evidence type="ECO:0000255" key="1">
    <source>
        <dbReference type="HAMAP-Rule" id="MF_01210"/>
    </source>
</evidence>
<proteinExistence type="inferred from homology"/>